<accession>B4TMG1</accession>
<comment type="function">
    <text evidence="1">Catalyzes a salvage reaction resulting in the formation of AMP, that is energically less costly than de novo synthesis.</text>
</comment>
<comment type="catalytic activity">
    <reaction evidence="1">
        <text>AMP + diphosphate = 5-phospho-alpha-D-ribose 1-diphosphate + adenine</text>
        <dbReference type="Rhea" id="RHEA:16609"/>
        <dbReference type="ChEBI" id="CHEBI:16708"/>
        <dbReference type="ChEBI" id="CHEBI:33019"/>
        <dbReference type="ChEBI" id="CHEBI:58017"/>
        <dbReference type="ChEBI" id="CHEBI:456215"/>
        <dbReference type="EC" id="2.4.2.7"/>
    </reaction>
</comment>
<comment type="pathway">
    <text evidence="1">Purine metabolism; AMP biosynthesis via salvage pathway; AMP from adenine: step 1/1.</text>
</comment>
<comment type="subunit">
    <text evidence="1">Homodimer.</text>
</comment>
<comment type="subcellular location">
    <subcellularLocation>
        <location evidence="1">Cytoplasm</location>
    </subcellularLocation>
</comment>
<comment type="similarity">
    <text evidence="1">Belongs to the purine/pyrimidine phosphoribosyltransferase family.</text>
</comment>
<sequence>MTATAQQLEFLKNSIKSIQDYPKPGILFRDVTSLLEDPKAYALSIELLVERYKNAGITKVVGTEARGFLFGAPVALGLGVGFVPVRKPRKLPRETIAETYELEYGTDQLEIHVDAIKPGDNVLVVDDLLATGGTIEATVKLIRRLGGKVTDAAFIINLFDLGGEQRLEKQGITCYSLVPFPGH</sequence>
<evidence type="ECO:0000255" key="1">
    <source>
        <dbReference type="HAMAP-Rule" id="MF_00004"/>
    </source>
</evidence>
<name>APT_SALSV</name>
<proteinExistence type="inferred from homology"/>
<protein>
    <recommendedName>
        <fullName evidence="1">Adenine phosphoribosyltransferase</fullName>
        <shortName evidence="1">APRT</shortName>
        <ecNumber evidence="1">2.4.2.7</ecNumber>
    </recommendedName>
</protein>
<organism>
    <name type="scientific">Salmonella schwarzengrund (strain CVM19633)</name>
    <dbReference type="NCBI Taxonomy" id="439843"/>
    <lineage>
        <taxon>Bacteria</taxon>
        <taxon>Pseudomonadati</taxon>
        <taxon>Pseudomonadota</taxon>
        <taxon>Gammaproteobacteria</taxon>
        <taxon>Enterobacterales</taxon>
        <taxon>Enterobacteriaceae</taxon>
        <taxon>Salmonella</taxon>
    </lineage>
</organism>
<reference key="1">
    <citation type="journal article" date="2011" name="J. Bacteriol.">
        <title>Comparative genomics of 28 Salmonella enterica isolates: evidence for CRISPR-mediated adaptive sublineage evolution.</title>
        <authorList>
            <person name="Fricke W.F."/>
            <person name="Mammel M.K."/>
            <person name="McDermott P.F."/>
            <person name="Tartera C."/>
            <person name="White D.G."/>
            <person name="Leclerc J.E."/>
            <person name="Ravel J."/>
            <person name="Cebula T.A."/>
        </authorList>
    </citation>
    <scope>NUCLEOTIDE SEQUENCE [LARGE SCALE GENOMIC DNA]</scope>
    <source>
        <strain>CVM19633</strain>
    </source>
</reference>
<dbReference type="EC" id="2.4.2.7" evidence="1"/>
<dbReference type="EMBL" id="CP001127">
    <property type="protein sequence ID" value="ACF89128.1"/>
    <property type="molecule type" value="Genomic_DNA"/>
</dbReference>
<dbReference type="RefSeq" id="WP_000127350.1">
    <property type="nucleotide sequence ID" value="NC_011094.1"/>
</dbReference>
<dbReference type="SMR" id="B4TMG1"/>
<dbReference type="KEGG" id="sew:SeSA_A0543"/>
<dbReference type="HOGENOM" id="CLU_063339_3_0_6"/>
<dbReference type="UniPathway" id="UPA00588">
    <property type="reaction ID" value="UER00646"/>
</dbReference>
<dbReference type="Proteomes" id="UP000001865">
    <property type="component" value="Chromosome"/>
</dbReference>
<dbReference type="GO" id="GO:0005829">
    <property type="term" value="C:cytosol"/>
    <property type="evidence" value="ECO:0007669"/>
    <property type="project" value="TreeGrafter"/>
</dbReference>
<dbReference type="GO" id="GO:0003999">
    <property type="term" value="F:adenine phosphoribosyltransferase activity"/>
    <property type="evidence" value="ECO:0007669"/>
    <property type="project" value="UniProtKB-UniRule"/>
</dbReference>
<dbReference type="GO" id="GO:0006168">
    <property type="term" value="P:adenine salvage"/>
    <property type="evidence" value="ECO:0007669"/>
    <property type="project" value="InterPro"/>
</dbReference>
<dbReference type="GO" id="GO:0044209">
    <property type="term" value="P:AMP salvage"/>
    <property type="evidence" value="ECO:0007669"/>
    <property type="project" value="UniProtKB-UniRule"/>
</dbReference>
<dbReference type="GO" id="GO:0006166">
    <property type="term" value="P:purine ribonucleoside salvage"/>
    <property type="evidence" value="ECO:0007669"/>
    <property type="project" value="UniProtKB-KW"/>
</dbReference>
<dbReference type="CDD" id="cd06223">
    <property type="entry name" value="PRTases_typeI"/>
    <property type="match status" value="1"/>
</dbReference>
<dbReference type="FunFam" id="3.40.50.2020:FF:000004">
    <property type="entry name" value="Adenine phosphoribosyltransferase"/>
    <property type="match status" value="1"/>
</dbReference>
<dbReference type="Gene3D" id="3.40.50.2020">
    <property type="match status" value="1"/>
</dbReference>
<dbReference type="HAMAP" id="MF_00004">
    <property type="entry name" value="Aden_phosphoribosyltr"/>
    <property type="match status" value="1"/>
</dbReference>
<dbReference type="InterPro" id="IPR005764">
    <property type="entry name" value="Ade_phspho_trans"/>
</dbReference>
<dbReference type="InterPro" id="IPR050120">
    <property type="entry name" value="Adenine_PRTase"/>
</dbReference>
<dbReference type="InterPro" id="IPR000836">
    <property type="entry name" value="PRibTrfase_dom"/>
</dbReference>
<dbReference type="InterPro" id="IPR029057">
    <property type="entry name" value="PRTase-like"/>
</dbReference>
<dbReference type="NCBIfam" id="TIGR01090">
    <property type="entry name" value="apt"/>
    <property type="match status" value="1"/>
</dbReference>
<dbReference type="NCBIfam" id="NF002632">
    <property type="entry name" value="PRK02304.1-1"/>
    <property type="match status" value="1"/>
</dbReference>
<dbReference type="NCBIfam" id="NF002634">
    <property type="entry name" value="PRK02304.1-3"/>
    <property type="match status" value="1"/>
</dbReference>
<dbReference type="NCBIfam" id="NF002636">
    <property type="entry name" value="PRK02304.1-5"/>
    <property type="match status" value="1"/>
</dbReference>
<dbReference type="PANTHER" id="PTHR11776">
    <property type="entry name" value="ADENINE PHOSPHORIBOSYLTRANSFERASE"/>
    <property type="match status" value="1"/>
</dbReference>
<dbReference type="PANTHER" id="PTHR11776:SF7">
    <property type="entry name" value="PHOSPHORIBOSYLTRANSFERASE DOMAIN-CONTAINING PROTEIN"/>
    <property type="match status" value="1"/>
</dbReference>
<dbReference type="Pfam" id="PF00156">
    <property type="entry name" value="Pribosyltran"/>
    <property type="match status" value="1"/>
</dbReference>
<dbReference type="SUPFAM" id="SSF53271">
    <property type="entry name" value="PRTase-like"/>
    <property type="match status" value="1"/>
</dbReference>
<dbReference type="PROSITE" id="PS00103">
    <property type="entry name" value="PUR_PYR_PR_TRANSFER"/>
    <property type="match status" value="1"/>
</dbReference>
<feature type="chain" id="PRO_1000089005" description="Adenine phosphoribosyltransferase">
    <location>
        <begin position="1"/>
        <end position="183"/>
    </location>
</feature>
<keyword id="KW-0963">Cytoplasm</keyword>
<keyword id="KW-0328">Glycosyltransferase</keyword>
<keyword id="KW-0660">Purine salvage</keyword>
<keyword id="KW-0808">Transferase</keyword>
<gene>
    <name evidence="1" type="primary">apt</name>
    <name type="ordered locus">SeSA_A0543</name>
</gene>